<name>NEK1_MOUSE</name>
<feature type="chain" id="PRO_0000086419" description="Serine/threonine-protein kinase Nek1">
    <location>
        <begin position="1"/>
        <end position="1203"/>
    </location>
</feature>
<feature type="domain" description="Protein kinase" evidence="3">
    <location>
        <begin position="4"/>
        <end position="258"/>
    </location>
</feature>
<feature type="region of interest" description="Disordered" evidence="5">
    <location>
        <begin position="329"/>
        <end position="357"/>
    </location>
</feature>
<feature type="region of interest" description="Disordered" evidence="5">
    <location>
        <begin position="643"/>
        <end position="662"/>
    </location>
</feature>
<feature type="region of interest" description="Disordered" evidence="5">
    <location>
        <begin position="674"/>
        <end position="708"/>
    </location>
</feature>
<feature type="region of interest" description="Disordered" evidence="5">
    <location>
        <begin position="814"/>
        <end position="866"/>
    </location>
</feature>
<feature type="region of interest" description="Disordered" evidence="5">
    <location>
        <begin position="888"/>
        <end position="925"/>
    </location>
</feature>
<feature type="region of interest" description="Disordered" evidence="5">
    <location>
        <begin position="1021"/>
        <end position="1045"/>
    </location>
</feature>
<feature type="region of interest" description="Disordered" evidence="5">
    <location>
        <begin position="1063"/>
        <end position="1120"/>
    </location>
</feature>
<feature type="compositionally biased region" description="Basic and acidic residues" evidence="5">
    <location>
        <begin position="674"/>
        <end position="683"/>
    </location>
</feature>
<feature type="compositionally biased region" description="Acidic residues" evidence="5">
    <location>
        <begin position="839"/>
        <end position="850"/>
    </location>
</feature>
<feature type="active site" description="Proton acceptor" evidence="3 4">
    <location>
        <position position="128"/>
    </location>
</feature>
<feature type="binding site" evidence="3">
    <location>
        <begin position="10"/>
        <end position="18"/>
    </location>
    <ligand>
        <name>ATP</name>
        <dbReference type="ChEBI" id="CHEBI:30616"/>
    </ligand>
</feature>
<feature type="binding site" evidence="3">
    <location>
        <position position="33"/>
    </location>
    <ligand>
        <name>ATP</name>
        <dbReference type="ChEBI" id="CHEBI:30616"/>
    </ligand>
</feature>
<feature type="modified residue" description="Phosphothreonine" evidence="2">
    <location>
        <position position="156"/>
    </location>
</feature>
<feature type="modified residue" description="Phosphothreonine; by autocatalysis" evidence="1">
    <location>
        <position position="162"/>
    </location>
</feature>
<feature type="modified residue" description="Phosphoserine" evidence="2">
    <location>
        <position position="417"/>
    </location>
</feature>
<feature type="modified residue" description="Phosphoserine" evidence="14">
    <location>
        <position position="437"/>
    </location>
</feature>
<feature type="modified residue" description="Phosphothreonine" evidence="2">
    <location>
        <position position="615"/>
    </location>
</feature>
<feature type="modified residue" description="Phosphoserine" evidence="14">
    <location>
        <position position="618"/>
    </location>
</feature>
<feature type="modified residue" description="Phosphoserine" evidence="2">
    <location>
        <position position="750"/>
    </location>
</feature>
<feature type="modified residue" description="Phosphoserine" evidence="2">
    <location>
        <position position="786"/>
    </location>
</feature>
<feature type="modified residue" description="Phosphoserine" evidence="2">
    <location>
        <position position="820"/>
    </location>
</feature>
<feature type="modified residue" description="Phosphoserine" evidence="2">
    <location>
        <position position="832"/>
    </location>
</feature>
<feature type="modified residue" description="Phosphoserine" evidence="13">
    <location>
        <position position="997"/>
    </location>
</feature>
<feature type="modified residue" description="Phosphoserine" evidence="14">
    <location>
        <position position="1071"/>
    </location>
</feature>
<feature type="mutagenesis site" description="Loss of 14-3-3 protein-binding." evidence="10">
    <original>S</original>
    <variation>A</variation>
    <location>
        <position position="997"/>
    </location>
</feature>
<gene>
    <name type="primary">Nek1</name>
</gene>
<organism>
    <name type="scientific">Mus musculus</name>
    <name type="common">Mouse</name>
    <dbReference type="NCBI Taxonomy" id="10090"/>
    <lineage>
        <taxon>Eukaryota</taxon>
        <taxon>Metazoa</taxon>
        <taxon>Chordata</taxon>
        <taxon>Craniata</taxon>
        <taxon>Vertebrata</taxon>
        <taxon>Euteleostomi</taxon>
        <taxon>Mammalia</taxon>
        <taxon>Eutheria</taxon>
        <taxon>Euarchontoglires</taxon>
        <taxon>Glires</taxon>
        <taxon>Rodentia</taxon>
        <taxon>Myomorpha</taxon>
        <taxon>Muroidea</taxon>
        <taxon>Muridae</taxon>
        <taxon>Murinae</taxon>
        <taxon>Mus</taxon>
        <taxon>Mus</taxon>
    </lineage>
</organism>
<comment type="function">
    <text evidence="2 7 9">Phosphorylates serines and threonines, but also appears to possess tyrosine kinase activity (PubMed:1382974). Involved in DNA damage checkpoint control and for proper DNA damage repair (PubMed:18843199). In response to injury that includes DNA damage, NEK1 phosphorylates VDAC1 to limit mitochondrial cell death (By similarity). May be implicated in the control of meiosis (PubMed:1382974). Involved in cilium assembly (By similarity).</text>
</comment>
<comment type="catalytic activity">
    <reaction evidence="7">
        <text>L-seryl-[protein] + ATP = O-phospho-L-seryl-[protein] + ADP + H(+)</text>
        <dbReference type="Rhea" id="RHEA:17989"/>
        <dbReference type="Rhea" id="RHEA-COMP:9863"/>
        <dbReference type="Rhea" id="RHEA-COMP:11604"/>
        <dbReference type="ChEBI" id="CHEBI:15378"/>
        <dbReference type="ChEBI" id="CHEBI:29999"/>
        <dbReference type="ChEBI" id="CHEBI:30616"/>
        <dbReference type="ChEBI" id="CHEBI:83421"/>
        <dbReference type="ChEBI" id="CHEBI:456216"/>
        <dbReference type="EC" id="2.7.11.1"/>
    </reaction>
</comment>
<comment type="catalytic activity">
    <reaction evidence="7">
        <text>L-threonyl-[protein] + ATP = O-phospho-L-threonyl-[protein] + ADP + H(+)</text>
        <dbReference type="Rhea" id="RHEA:46608"/>
        <dbReference type="Rhea" id="RHEA-COMP:11060"/>
        <dbReference type="Rhea" id="RHEA-COMP:11605"/>
        <dbReference type="ChEBI" id="CHEBI:15378"/>
        <dbReference type="ChEBI" id="CHEBI:30013"/>
        <dbReference type="ChEBI" id="CHEBI:30616"/>
        <dbReference type="ChEBI" id="CHEBI:61977"/>
        <dbReference type="ChEBI" id="CHEBI:456216"/>
        <dbReference type="EC" id="2.7.11.1"/>
    </reaction>
</comment>
<comment type="cofactor">
    <cofactor>
        <name>Mg(2+)</name>
        <dbReference type="ChEBI" id="CHEBI:18420"/>
    </cofactor>
</comment>
<comment type="subunit">
    <text evidence="2 6 10">Binds to CBY2 (PubMed:12204287). Found in a complex with CFAP410, NEK1 and SPATA7 (By similarity). Interacts with CFAP410 (By similarity). Interacts (via Ser-997 phosphorylated form) with 14-3-3 proteins (PubMed:28235073).</text>
</comment>
<comment type="subcellular location">
    <subcellularLocation>
        <location evidence="12">Nucleus</location>
    </subcellularLocation>
    <subcellularLocation>
        <location evidence="8">Cytoplasm</location>
        <location evidence="8">Cytoskeleton</location>
        <location evidence="8">Microtubule organizing center</location>
        <location evidence="8">Centrosome</location>
    </subcellularLocation>
    <text evidence="2 8">Associated with the pericentriolar material (By similarity). Localizes to centrosome during interphase and mitosis (PubMed:16267153).</text>
</comment>
<comment type="tissue specificity">
    <text evidence="7">Predominantly in testes (germ cells and Sertoli cells). Lower levels in ovary (oocytes and granulosa cells), thymus and lung.</text>
</comment>
<comment type="developmental stage">
    <text>In female, expressed as follicles enter the secondary stage until ovulation occurs. In the male reproductive system, the expression is limited to spermatocytes and spermatids.</text>
</comment>
<comment type="similarity">
    <text evidence="11">Belongs to the protein kinase superfamily. NEK Ser/Thr protein kinase family. NIMA subfamily.</text>
</comment>
<proteinExistence type="evidence at protein level"/>
<dbReference type="EC" id="2.7.11.1" evidence="7"/>
<dbReference type="EMBL" id="AY850065">
    <property type="protein sequence ID" value="AAB23529.2"/>
    <property type="molecule type" value="mRNA"/>
</dbReference>
<dbReference type="CCDS" id="CCDS40347.1"/>
<dbReference type="PIR" id="S25284">
    <property type="entry name" value="S25284"/>
</dbReference>
<dbReference type="RefSeq" id="NP_001280566.1">
    <property type="nucleotide sequence ID" value="NM_001293637.1"/>
</dbReference>
<dbReference type="RefSeq" id="NP_001280567.1">
    <property type="nucleotide sequence ID" value="NM_001293638.1"/>
</dbReference>
<dbReference type="RefSeq" id="NP_001280568.1">
    <property type="nucleotide sequence ID" value="NM_001293639.1"/>
</dbReference>
<dbReference type="RefSeq" id="NP_780298.2">
    <property type="nucleotide sequence ID" value="NM_175089.4"/>
</dbReference>
<dbReference type="SMR" id="P51954"/>
<dbReference type="BioGRID" id="201727">
    <property type="interactions" value="7"/>
</dbReference>
<dbReference type="FunCoup" id="P51954">
    <property type="interactions" value="4242"/>
</dbReference>
<dbReference type="IntAct" id="P51954">
    <property type="interactions" value="4"/>
</dbReference>
<dbReference type="STRING" id="10090.ENSMUSP00000147809"/>
<dbReference type="GlyGen" id="P51954">
    <property type="glycosylation" value="1 site, 1 N-linked glycan (1 site)"/>
</dbReference>
<dbReference type="iPTMnet" id="P51954"/>
<dbReference type="PhosphoSitePlus" id="P51954"/>
<dbReference type="jPOST" id="P51954"/>
<dbReference type="PaxDb" id="10090-ENSMUSP00000034065"/>
<dbReference type="ProteomicsDB" id="252879"/>
<dbReference type="Pumba" id="P51954"/>
<dbReference type="Antibodypedia" id="28454">
    <property type="antibodies" value="146 antibodies from 27 providers"/>
</dbReference>
<dbReference type="DNASU" id="18004"/>
<dbReference type="Ensembl" id="ENSMUST00000034065.14">
    <property type="protein sequence ID" value="ENSMUSP00000034065.8"/>
    <property type="gene ID" value="ENSMUSG00000031644.20"/>
</dbReference>
<dbReference type="GeneID" id="18004"/>
<dbReference type="KEGG" id="mmu:18004"/>
<dbReference type="UCSC" id="uc009ltt.2">
    <property type="organism name" value="mouse"/>
</dbReference>
<dbReference type="AGR" id="MGI:97303"/>
<dbReference type="CTD" id="4750"/>
<dbReference type="MGI" id="MGI:97303">
    <property type="gene designation" value="Nek1"/>
</dbReference>
<dbReference type="VEuPathDB" id="HostDB:ENSMUSG00000031644"/>
<dbReference type="eggNOG" id="KOG0589">
    <property type="taxonomic scope" value="Eukaryota"/>
</dbReference>
<dbReference type="GeneTree" id="ENSGT00940000158460"/>
<dbReference type="InParanoid" id="P51954"/>
<dbReference type="OMA" id="ELNEEWH"/>
<dbReference type="OrthoDB" id="248923at2759"/>
<dbReference type="TreeFam" id="TF333575"/>
<dbReference type="Reactome" id="R-MMU-9861718">
    <property type="pathway name" value="Regulation of pyruvate metabolism"/>
</dbReference>
<dbReference type="BioGRID-ORCS" id="18004">
    <property type="hits" value="5 hits in 81 CRISPR screens"/>
</dbReference>
<dbReference type="ChiTaRS" id="Nek1">
    <property type="organism name" value="mouse"/>
</dbReference>
<dbReference type="PRO" id="PR:P51954"/>
<dbReference type="Proteomes" id="UP000000589">
    <property type="component" value="Chromosome 8"/>
</dbReference>
<dbReference type="RNAct" id="P51954">
    <property type="molecule type" value="protein"/>
</dbReference>
<dbReference type="Bgee" id="ENSMUSG00000031644">
    <property type="expression patterns" value="Expressed in sciatic nerve and 232 other cell types or tissues"/>
</dbReference>
<dbReference type="ExpressionAtlas" id="P51954">
    <property type="expression patterns" value="baseline and differential"/>
</dbReference>
<dbReference type="GO" id="GO:0005813">
    <property type="term" value="C:centrosome"/>
    <property type="evidence" value="ECO:0000314"/>
    <property type="project" value="UniProtKB"/>
</dbReference>
<dbReference type="GO" id="GO:0005737">
    <property type="term" value="C:cytoplasm"/>
    <property type="evidence" value="ECO:0000266"/>
    <property type="project" value="MGI"/>
</dbReference>
<dbReference type="GO" id="GO:0005634">
    <property type="term" value="C:nucleus"/>
    <property type="evidence" value="ECO:0000314"/>
    <property type="project" value="MGI"/>
</dbReference>
<dbReference type="GO" id="GO:0071889">
    <property type="term" value="F:14-3-3 protein binding"/>
    <property type="evidence" value="ECO:0000314"/>
    <property type="project" value="UniProtKB"/>
</dbReference>
<dbReference type="GO" id="GO:0005524">
    <property type="term" value="F:ATP binding"/>
    <property type="evidence" value="ECO:0007669"/>
    <property type="project" value="UniProtKB-KW"/>
</dbReference>
<dbReference type="GO" id="GO:0046872">
    <property type="term" value="F:metal ion binding"/>
    <property type="evidence" value="ECO:0007669"/>
    <property type="project" value="UniProtKB-KW"/>
</dbReference>
<dbReference type="GO" id="GO:0004672">
    <property type="term" value="F:protein kinase activity"/>
    <property type="evidence" value="ECO:0000266"/>
    <property type="project" value="MGI"/>
</dbReference>
<dbReference type="GO" id="GO:0106310">
    <property type="term" value="F:protein serine kinase activity"/>
    <property type="evidence" value="ECO:0007669"/>
    <property type="project" value="RHEA"/>
</dbReference>
<dbReference type="GO" id="GO:0004674">
    <property type="term" value="F:protein serine/threonine kinase activity"/>
    <property type="evidence" value="ECO:0007669"/>
    <property type="project" value="UniProtKB-KW"/>
</dbReference>
<dbReference type="GO" id="GO:0004713">
    <property type="term" value="F:protein tyrosine kinase activity"/>
    <property type="evidence" value="ECO:0007669"/>
    <property type="project" value="UniProtKB-KW"/>
</dbReference>
<dbReference type="GO" id="GO:0051301">
    <property type="term" value="P:cell division"/>
    <property type="evidence" value="ECO:0007669"/>
    <property type="project" value="UniProtKB-KW"/>
</dbReference>
<dbReference type="GO" id="GO:0030030">
    <property type="term" value="P:cell projection organization"/>
    <property type="evidence" value="ECO:0007669"/>
    <property type="project" value="UniProtKB-KW"/>
</dbReference>
<dbReference type="GO" id="GO:0006974">
    <property type="term" value="P:DNA damage response"/>
    <property type="evidence" value="ECO:0000315"/>
    <property type="project" value="MGI"/>
</dbReference>
<dbReference type="GO" id="GO:0001822">
    <property type="term" value="P:kidney development"/>
    <property type="evidence" value="ECO:0000315"/>
    <property type="project" value="MGI"/>
</dbReference>
<dbReference type="GO" id="GO:0035264">
    <property type="term" value="P:multicellular organism growth"/>
    <property type="evidence" value="ECO:0000315"/>
    <property type="project" value="MGI"/>
</dbReference>
<dbReference type="GO" id="GO:2000001">
    <property type="term" value="P:regulation of DNA damage checkpoint"/>
    <property type="evidence" value="ECO:0000315"/>
    <property type="project" value="CACAO"/>
</dbReference>
<dbReference type="GO" id="GO:0010212">
    <property type="term" value="P:response to ionizing radiation"/>
    <property type="evidence" value="ECO:0000315"/>
    <property type="project" value="MGI"/>
</dbReference>
<dbReference type="GO" id="GO:0007283">
    <property type="term" value="P:spermatogenesis"/>
    <property type="evidence" value="ECO:0000315"/>
    <property type="project" value="MGI"/>
</dbReference>
<dbReference type="CDD" id="cd08218">
    <property type="entry name" value="STKc_Nek1"/>
    <property type="match status" value="1"/>
</dbReference>
<dbReference type="FunFam" id="3.30.200.20:FF:000097">
    <property type="entry name" value="Probable serine/threonine-protein kinase nek1"/>
    <property type="match status" value="1"/>
</dbReference>
<dbReference type="FunFam" id="1.10.510.10:FF:000172">
    <property type="entry name" value="serine/threonine-protein kinase Nek1 isoform X1"/>
    <property type="match status" value="1"/>
</dbReference>
<dbReference type="Gene3D" id="3.30.200.20">
    <property type="entry name" value="Phosphorylase Kinase, domain 1"/>
    <property type="match status" value="1"/>
</dbReference>
<dbReference type="Gene3D" id="1.10.510.10">
    <property type="entry name" value="Transferase(Phosphotransferase) domain 1"/>
    <property type="match status" value="1"/>
</dbReference>
<dbReference type="InterPro" id="IPR011009">
    <property type="entry name" value="Kinase-like_dom_sf"/>
</dbReference>
<dbReference type="InterPro" id="IPR051131">
    <property type="entry name" value="NEK_Ser/Thr_kinase_NIMA"/>
</dbReference>
<dbReference type="InterPro" id="IPR000719">
    <property type="entry name" value="Prot_kinase_dom"/>
</dbReference>
<dbReference type="InterPro" id="IPR017441">
    <property type="entry name" value="Protein_kinase_ATP_BS"/>
</dbReference>
<dbReference type="InterPro" id="IPR008271">
    <property type="entry name" value="Ser/Thr_kinase_AS"/>
</dbReference>
<dbReference type="PANTHER" id="PTHR44899">
    <property type="entry name" value="CAMK FAMILY PROTEIN KINASE"/>
    <property type="match status" value="1"/>
</dbReference>
<dbReference type="PANTHER" id="PTHR44899:SF4">
    <property type="entry name" value="SERINE_THREONINE-PROTEIN KINASE NEK1"/>
    <property type="match status" value="1"/>
</dbReference>
<dbReference type="Pfam" id="PF00069">
    <property type="entry name" value="Pkinase"/>
    <property type="match status" value="1"/>
</dbReference>
<dbReference type="SMART" id="SM00220">
    <property type="entry name" value="S_TKc"/>
    <property type="match status" value="1"/>
</dbReference>
<dbReference type="SUPFAM" id="SSF56112">
    <property type="entry name" value="Protein kinase-like (PK-like)"/>
    <property type="match status" value="1"/>
</dbReference>
<dbReference type="PROSITE" id="PS00107">
    <property type="entry name" value="PROTEIN_KINASE_ATP"/>
    <property type="match status" value="1"/>
</dbReference>
<dbReference type="PROSITE" id="PS50011">
    <property type="entry name" value="PROTEIN_KINASE_DOM"/>
    <property type="match status" value="1"/>
</dbReference>
<dbReference type="PROSITE" id="PS00108">
    <property type="entry name" value="PROTEIN_KINASE_ST"/>
    <property type="match status" value="1"/>
</dbReference>
<accession>P51954</accession>
<reference key="1">
    <citation type="journal article" date="1992" name="EMBO J.">
        <title>A mammalian dual specificity protein kinase, Nek1, is related to the NIMA cell cycle regulator and highly expressed in meiotic germ cells.</title>
        <authorList>
            <person name="Letwin K."/>
            <person name="Mizzen L."/>
            <person name="Motro B."/>
            <person name="Ben-David Y."/>
            <person name="Bernstein A."/>
            <person name="Pawson T."/>
        </authorList>
    </citation>
    <scope>NUCLEOTIDE SEQUENCE [MRNA]</scope>
    <scope>TISSUE SPECIFICITY</scope>
    <scope>FUNCTION</scope>
    <scope>CATALYTIC ACTIVITY</scope>
    <source>
        <tissue>Blood</tissue>
    </source>
</reference>
<reference key="2">
    <citation type="submission" date="2004-12" db="EMBL/GenBank/DDBJ databases">
        <authorList>
            <person name="Feige E."/>
            <person name="Motro B."/>
        </authorList>
    </citation>
    <scope>SEQUENCE REVISION TO C-TERMINUS</scope>
</reference>
<reference key="3">
    <citation type="journal article" date="2002" name="Mech. Dev.">
        <title>Nurit, a novel leucine-zipper protein, expressed uniquely in the spermatid flower-like structure.</title>
        <authorList>
            <person name="Feige E."/>
            <person name="Chen A."/>
            <person name="Motro B."/>
        </authorList>
    </citation>
    <scope>INTERACTION WITH CBY2</scope>
    <source>
        <strain>CD-1</strain>
    </source>
</reference>
<reference key="4">
    <citation type="journal article" date="2004" name="Mol. Cell. Proteomics">
        <title>Phosphoproteomic analysis of the developing mouse brain.</title>
        <authorList>
            <person name="Ballif B.A."/>
            <person name="Villen J."/>
            <person name="Beausoleil S.A."/>
            <person name="Schwartz D."/>
            <person name="Gygi S.P."/>
        </authorList>
    </citation>
    <scope>IDENTIFICATION BY MASS SPECTROMETRY [LARGE SCALE ANALYSIS]</scope>
    <source>
        <tissue>Embryonic brain</tissue>
    </source>
</reference>
<reference key="5">
    <citation type="journal article" date="2005" name="J. Am. Soc. Nephrol.">
        <title>NIMA-related kinases defective in murine models of polycystic kidney diseases localize to primary cilia and centrosomes.</title>
        <authorList>
            <person name="Mahjoub M.R."/>
            <person name="Trapp M.L."/>
            <person name="Quarmby L.M."/>
        </authorList>
    </citation>
    <scope>SUBCELLULAR LOCATION</scope>
</reference>
<reference key="6">
    <citation type="journal article" date="2008" name="Cell Cycle">
        <title>Never-in-mitosis related kinase 1 functions in DNA damage response and checkpoint control.</title>
        <authorList>
            <person name="Chen Y."/>
            <person name="Chen P.L."/>
            <person name="Chen C.F."/>
            <person name="Jiang X."/>
            <person name="Riley D.J."/>
        </authorList>
    </citation>
    <scope>FUNCTION</scope>
</reference>
<reference key="7">
    <citation type="journal article" date="2010" name="Cell">
        <title>A tissue-specific atlas of mouse protein phosphorylation and expression.</title>
        <authorList>
            <person name="Huttlin E.L."/>
            <person name="Jedrychowski M.P."/>
            <person name="Elias J.E."/>
            <person name="Goswami T."/>
            <person name="Rad R."/>
            <person name="Beausoleil S.A."/>
            <person name="Villen J."/>
            <person name="Haas W."/>
            <person name="Sowa M.E."/>
            <person name="Gygi S.P."/>
        </authorList>
    </citation>
    <scope>PHOSPHORYLATION [LARGE SCALE ANALYSIS] AT SER-437; SER-618 AND SER-1071</scope>
    <scope>IDENTIFICATION BY MASS SPECTROMETRY [LARGE SCALE ANALYSIS]</scope>
    <source>
        <tissue>Brain</tissue>
        <tissue>Brown adipose tissue</tissue>
        <tissue>Heart</tissue>
        <tissue>Kidney</tissue>
        <tissue>Lung</tissue>
        <tissue>Spleen</tissue>
        <tissue>Testis</tissue>
    </source>
</reference>
<reference key="8">
    <citation type="journal article" date="2017" name="PLoS ONE">
        <title>Analysis of a cAMP regulated coactivator family reveals an alternative phosphorylation motif for AMPK family members.</title>
        <authorList>
            <person name="Sonntag T."/>
            <person name="Moresco J.J."/>
            <person name="Vaughan J.M."/>
            <person name="Matsumura S."/>
            <person name="Yates J.R. III"/>
            <person name="Montminy M."/>
        </authorList>
    </citation>
    <scope>MUTAGENESIS OF SER-997</scope>
    <scope>PHOSPHORYLATION AT SER-997</scope>
    <scope>INTERACTION WITH 14-3-3 PROTEINS</scope>
</reference>
<sequence length="1203" mass="136690">MEKYVRLQKIGEGSFGKAVLVKSTEDGRHYVIKEINISRMSDKERQESRREVAVLANMKHPNIVQYKESFEENGSLYIVMDYCEGGDLFKRINAQKGALFQEDQILDWFVQICLALKHVHDRKILHRDIKSQNIFLTKDGTVQLGDFGIARVLNSTVELARTCIGTPYYLSPEICENKPYNNKSDIWALGCVLYELCTLKHAFEAGNMKNLVLKIISGSFPPVSPHYSYDLRSLLSQLFKRNPRDRPSVNSILEKGFIAKRIEKFLSPQLIAEEFCLKTLSKFGPQPLPGKRPASGQGVSSFVPAQKITKPAAKYGVPLTYKKYGDKKLLEKKPPPKHKQAHQIPVKKMNSGEERKKMSEEAAKKRRLEFIEKEKKQKDQIRFLKAEQMKRQEKQRLERINRAREQGWRNVLRAGGSGEVKASFFGIGGAVSPSPCSPRGQYEHYHAIFDQMQRLRAEDNEARWKGGIYGRWLPERQKGHLAVERANQVEEFLQRKREAMQNKARAEGHVVYLARLRQIRLQNFNERQQIKAKLRGENKEADGTKGQEATEETDMRLKKMESLKAQTNARAAVLKEQLERKRKEAYEREKKVWEEHLVARVKSSDVPLPLELLETGGSPSKQQVKPVISVTSALKEVGLDGSLTDTQEEEMEKSNSAISSKREILRRLNENLKAQEDEKEKQHHSGSCETVGHKDEREYETENAISSDRKKWEMGGQLVIPLDAVTLDTSFSATEKHTVGEVIKLDSNGSPRKVWGKNPTDSVLKILGEAELQLQTELLENTSFKSEVYAEEENYKPLLTEEENLQCISKEINPSATVDSTETKSPKFTEVSPQMSEGNVEEPDDLETEVLQEPSSTHTDGSLPPVLNDVWTREKEAAKETELEDKVAVQQSEVCEDRIPGNVDQSCKDQRDPAVDDSPQSGCDVEKSVQPESIFQKVVHSKDLNLVQAVHCSPEEPIPIRSHSDSPPKTKSKNSLLIGLSTGLFDANNPKMLRTCSLPDLSKLFRTLMDVPTVGDVHQDSLEIDELEDEPIKEGPSDSEDTVFEETDTDLQELQASMEQLLREQPGDEYSEEEESVLKSSDVEQTARGTDAPDEEDNPSSESALNEEWHSDNSDAETTSECEYDSVFNHLEELRLHLEQEMGFEKFFEVYEKVKAIHEDEDENIEICSTIVENILGNEHQHLYAKILHLVMADGAYQEDNDE</sequence>
<keyword id="KW-0067">ATP-binding</keyword>
<keyword id="KW-0131">Cell cycle</keyword>
<keyword id="KW-0132">Cell division</keyword>
<keyword id="KW-0970">Cilium biogenesis/degradation</keyword>
<keyword id="KW-0963">Cytoplasm</keyword>
<keyword id="KW-0206">Cytoskeleton</keyword>
<keyword id="KW-0418">Kinase</keyword>
<keyword id="KW-0460">Magnesium</keyword>
<keyword id="KW-0479">Metal-binding</keyword>
<keyword id="KW-0498">Mitosis</keyword>
<keyword id="KW-0547">Nucleotide-binding</keyword>
<keyword id="KW-0539">Nucleus</keyword>
<keyword id="KW-0597">Phosphoprotein</keyword>
<keyword id="KW-1185">Reference proteome</keyword>
<keyword id="KW-0723">Serine/threonine-protein kinase</keyword>
<keyword id="KW-0808">Transferase</keyword>
<keyword id="KW-0829">Tyrosine-protein kinase</keyword>
<protein>
    <recommendedName>
        <fullName>Serine/threonine-protein kinase Nek1</fullName>
        <ecNumber evidence="7">2.7.11.1</ecNumber>
    </recommendedName>
    <alternativeName>
        <fullName>Never in mitosis A-related kinase 1</fullName>
        <shortName>NimA-related protein kinase 1</shortName>
    </alternativeName>
</protein>
<evidence type="ECO:0000250" key="1"/>
<evidence type="ECO:0000250" key="2">
    <source>
        <dbReference type="UniProtKB" id="Q96PY6"/>
    </source>
</evidence>
<evidence type="ECO:0000255" key="3">
    <source>
        <dbReference type="PROSITE-ProRule" id="PRU00159"/>
    </source>
</evidence>
<evidence type="ECO:0000255" key="4">
    <source>
        <dbReference type="PROSITE-ProRule" id="PRU10027"/>
    </source>
</evidence>
<evidence type="ECO:0000256" key="5">
    <source>
        <dbReference type="SAM" id="MobiDB-lite"/>
    </source>
</evidence>
<evidence type="ECO:0000269" key="6">
    <source>
    </source>
</evidence>
<evidence type="ECO:0000269" key="7">
    <source>
    </source>
</evidence>
<evidence type="ECO:0000269" key="8">
    <source>
    </source>
</evidence>
<evidence type="ECO:0000269" key="9">
    <source>
    </source>
</evidence>
<evidence type="ECO:0000269" key="10">
    <source>
    </source>
</evidence>
<evidence type="ECO:0000305" key="11"/>
<evidence type="ECO:0000305" key="12">
    <source>
    </source>
</evidence>
<evidence type="ECO:0000305" key="13">
    <source>
    </source>
</evidence>
<evidence type="ECO:0007744" key="14">
    <source>
    </source>
</evidence>